<accession>Q2H683</accession>
<dbReference type="EC" id="3.1.3.77" evidence="1"/>
<dbReference type="EMBL" id="CH408031">
    <property type="protein sequence ID" value="EAQ89213.1"/>
    <property type="molecule type" value="Genomic_DNA"/>
</dbReference>
<dbReference type="RefSeq" id="XP_001221927.1">
    <property type="nucleotide sequence ID" value="XM_001221926.1"/>
</dbReference>
<dbReference type="SMR" id="Q2H683"/>
<dbReference type="FunCoup" id="Q2H683">
    <property type="interactions" value="566"/>
</dbReference>
<dbReference type="STRING" id="306901.Q2H683"/>
<dbReference type="GeneID" id="4390056"/>
<dbReference type="VEuPathDB" id="FungiDB:CHGG_05832"/>
<dbReference type="eggNOG" id="KOG2630">
    <property type="taxonomic scope" value="Eukaryota"/>
</dbReference>
<dbReference type="HOGENOM" id="CLU_023273_1_1_1"/>
<dbReference type="InParanoid" id="Q2H683"/>
<dbReference type="OMA" id="LQGMVWE"/>
<dbReference type="OrthoDB" id="272500at2759"/>
<dbReference type="UniPathway" id="UPA00904">
    <property type="reaction ID" value="UER00876"/>
</dbReference>
<dbReference type="UniPathway" id="UPA00904">
    <property type="reaction ID" value="UER00877"/>
</dbReference>
<dbReference type="Proteomes" id="UP000001056">
    <property type="component" value="Unassembled WGS sequence"/>
</dbReference>
<dbReference type="GO" id="GO:0005737">
    <property type="term" value="C:cytoplasm"/>
    <property type="evidence" value="ECO:0007669"/>
    <property type="project" value="UniProtKB-SubCell"/>
</dbReference>
<dbReference type="GO" id="GO:0005634">
    <property type="term" value="C:nucleus"/>
    <property type="evidence" value="ECO:0007669"/>
    <property type="project" value="UniProtKB-SubCell"/>
</dbReference>
<dbReference type="GO" id="GO:0043874">
    <property type="term" value="F:acireductone synthase activity"/>
    <property type="evidence" value="ECO:0007669"/>
    <property type="project" value="UniProtKB-EC"/>
</dbReference>
<dbReference type="GO" id="GO:0000287">
    <property type="term" value="F:magnesium ion binding"/>
    <property type="evidence" value="ECO:0007669"/>
    <property type="project" value="UniProtKB-UniRule"/>
</dbReference>
<dbReference type="GO" id="GO:0019509">
    <property type="term" value="P:L-methionine salvage from methylthioadenosine"/>
    <property type="evidence" value="ECO:0007669"/>
    <property type="project" value="UniProtKB-UniRule"/>
</dbReference>
<dbReference type="CDD" id="cd01629">
    <property type="entry name" value="HAD_EP"/>
    <property type="match status" value="1"/>
</dbReference>
<dbReference type="FunFam" id="1.10.720.60:FF:000007">
    <property type="entry name" value="Enolase-phosphatase E1"/>
    <property type="match status" value="1"/>
</dbReference>
<dbReference type="Gene3D" id="1.10.720.60">
    <property type="match status" value="1"/>
</dbReference>
<dbReference type="Gene3D" id="3.40.50.1000">
    <property type="entry name" value="HAD superfamily/HAD-like"/>
    <property type="match status" value="1"/>
</dbReference>
<dbReference type="HAMAP" id="MF_03117">
    <property type="entry name" value="Salvage_MtnC_euk"/>
    <property type="match status" value="1"/>
</dbReference>
<dbReference type="InterPro" id="IPR023943">
    <property type="entry name" value="Enolase-ppase_E1"/>
</dbReference>
<dbReference type="InterPro" id="IPR027511">
    <property type="entry name" value="ENOPH1_eukaryotes"/>
</dbReference>
<dbReference type="InterPro" id="IPR036412">
    <property type="entry name" value="HAD-like_sf"/>
</dbReference>
<dbReference type="InterPro" id="IPR023214">
    <property type="entry name" value="HAD_sf"/>
</dbReference>
<dbReference type="NCBIfam" id="TIGR01691">
    <property type="entry name" value="enolase-ppase"/>
    <property type="match status" value="1"/>
</dbReference>
<dbReference type="PANTHER" id="PTHR20371">
    <property type="entry name" value="ENOLASE-PHOSPHATASE E1"/>
    <property type="match status" value="1"/>
</dbReference>
<dbReference type="PANTHER" id="PTHR20371:SF1">
    <property type="entry name" value="ENOLASE-PHOSPHATASE E1"/>
    <property type="match status" value="1"/>
</dbReference>
<dbReference type="Pfam" id="PF00702">
    <property type="entry name" value="Hydrolase"/>
    <property type="match status" value="1"/>
</dbReference>
<dbReference type="SFLD" id="SFLDG01133">
    <property type="entry name" value="C1.5.4:_Enolase-phosphatase_Li"/>
    <property type="match status" value="1"/>
</dbReference>
<dbReference type="SFLD" id="SFLDG01129">
    <property type="entry name" value="C1.5:_HAD__Beta-PGM__Phosphata"/>
    <property type="match status" value="1"/>
</dbReference>
<dbReference type="SUPFAM" id="SSF56784">
    <property type="entry name" value="HAD-like"/>
    <property type="match status" value="1"/>
</dbReference>
<keyword id="KW-0028">Amino-acid biosynthesis</keyword>
<keyword id="KW-0963">Cytoplasm</keyword>
<keyword id="KW-0378">Hydrolase</keyword>
<keyword id="KW-0460">Magnesium</keyword>
<keyword id="KW-0479">Metal-binding</keyword>
<keyword id="KW-0486">Methionine biosynthesis</keyword>
<keyword id="KW-0539">Nucleus</keyword>
<keyword id="KW-1185">Reference proteome</keyword>
<sequence length="239" mass="25944">MAAAKKPRVVLLDIEGTVCPISFVKDVLFPYALSALPSTLAQEWDAPAFARYRAAFPAEHASTPSALAAHARDLMARDVKIGYLKALQGYLWEAGYASGALRAPLFEDVAPKVREWTSAAGEEGGVARVMIYSSGSVPAQKLLFRHTSGEPADLTDAITDYFDTVNAGPKTEPASYERIAAKYPEVPAGEWLFLSDNVREVEAAREAGMRACVVQRPGNAELPEDVRGRLEVVESFEEL</sequence>
<comment type="function">
    <text evidence="1">Bifunctional enzyme that catalyzes the enolization of 2,3-diketo-5-methylthiopentyl-1-phosphate (DK-MTP-1-P) into the intermediate 2-hydroxy-3-keto-5-methylthiopentenyl-1-phosphate (HK-MTPenyl-1-P), which is then dephosphorylated to form the acireductone 1,2-dihydroxy-3-keto-5-methylthiopentene (DHK-MTPene).</text>
</comment>
<comment type="catalytic activity">
    <reaction evidence="1">
        <text>5-methylsulfanyl-2,3-dioxopentyl phosphate + H2O = 1,2-dihydroxy-5-(methylsulfanyl)pent-1-en-3-one + phosphate</text>
        <dbReference type="Rhea" id="RHEA:21700"/>
        <dbReference type="ChEBI" id="CHEBI:15377"/>
        <dbReference type="ChEBI" id="CHEBI:43474"/>
        <dbReference type="ChEBI" id="CHEBI:49252"/>
        <dbReference type="ChEBI" id="CHEBI:58828"/>
        <dbReference type="EC" id="3.1.3.77"/>
    </reaction>
</comment>
<comment type="cofactor">
    <cofactor evidence="1">
        <name>Mg(2+)</name>
        <dbReference type="ChEBI" id="CHEBI:18420"/>
    </cofactor>
    <text evidence="1">Binds 1 Mg(2+) ion per subunit.</text>
</comment>
<comment type="pathway">
    <text evidence="1">Amino-acid biosynthesis; L-methionine biosynthesis via salvage pathway; L-methionine from S-methyl-5-thio-alpha-D-ribose 1-phosphate: step 3/6.</text>
</comment>
<comment type="pathway">
    <text evidence="1">Amino-acid biosynthesis; L-methionine biosynthesis via salvage pathway; L-methionine from S-methyl-5-thio-alpha-D-ribose 1-phosphate: step 4/6.</text>
</comment>
<comment type="subunit">
    <text evidence="1">Monomer.</text>
</comment>
<comment type="subcellular location">
    <subcellularLocation>
        <location evidence="1">Cytoplasm</location>
    </subcellularLocation>
    <subcellularLocation>
        <location evidence="1">Nucleus</location>
    </subcellularLocation>
</comment>
<comment type="similarity">
    <text evidence="1">Belongs to the HAD-like hydrolase superfamily. MasA/MtnC family.</text>
</comment>
<reference key="1">
    <citation type="journal article" date="2015" name="Genome Announc.">
        <title>Draft genome sequence of the cellulolytic fungus Chaetomium globosum.</title>
        <authorList>
            <person name="Cuomo C.A."/>
            <person name="Untereiner W.A."/>
            <person name="Ma L.-J."/>
            <person name="Grabherr M."/>
            <person name="Birren B.W."/>
        </authorList>
    </citation>
    <scope>NUCLEOTIDE SEQUENCE [LARGE SCALE GENOMIC DNA]</scope>
    <source>
        <strain>ATCC 6205 / CBS 148.51 / DSM 1962 / NBRC 6347 / NRRL 1970</strain>
    </source>
</reference>
<organism>
    <name type="scientific">Chaetomium globosum (strain ATCC 6205 / CBS 148.51 / DSM 1962 / NBRC 6347 / NRRL 1970)</name>
    <name type="common">Soil fungus</name>
    <dbReference type="NCBI Taxonomy" id="306901"/>
    <lineage>
        <taxon>Eukaryota</taxon>
        <taxon>Fungi</taxon>
        <taxon>Dikarya</taxon>
        <taxon>Ascomycota</taxon>
        <taxon>Pezizomycotina</taxon>
        <taxon>Sordariomycetes</taxon>
        <taxon>Sordariomycetidae</taxon>
        <taxon>Sordariales</taxon>
        <taxon>Chaetomiaceae</taxon>
        <taxon>Chaetomium</taxon>
    </lineage>
</organism>
<gene>
    <name evidence="1" type="primary">UTR4</name>
    <name type="ORF">CHGG_05832</name>
</gene>
<evidence type="ECO:0000255" key="1">
    <source>
        <dbReference type="HAMAP-Rule" id="MF_03117"/>
    </source>
</evidence>
<feature type="chain" id="PRO_0000393997" description="Enolase-phosphatase E1">
    <location>
        <begin position="1"/>
        <end position="239"/>
    </location>
</feature>
<feature type="binding site" evidence="1">
    <location>
        <position position="13"/>
    </location>
    <ligand>
        <name>Mg(2+)</name>
        <dbReference type="ChEBI" id="CHEBI:18420"/>
    </ligand>
</feature>
<feature type="binding site" evidence="1">
    <location>
        <position position="15"/>
    </location>
    <ligand>
        <name>Mg(2+)</name>
        <dbReference type="ChEBI" id="CHEBI:18420"/>
    </ligand>
</feature>
<feature type="binding site" evidence="1">
    <location>
        <begin position="133"/>
        <end position="134"/>
    </location>
    <ligand>
        <name>substrate</name>
    </ligand>
</feature>
<feature type="binding site" evidence="1">
    <location>
        <position position="170"/>
    </location>
    <ligand>
        <name>substrate</name>
    </ligand>
</feature>
<feature type="binding site" evidence="1">
    <location>
        <position position="196"/>
    </location>
    <ligand>
        <name>Mg(2+)</name>
        <dbReference type="ChEBI" id="CHEBI:18420"/>
    </ligand>
</feature>
<name>ENOPH_CHAGB</name>
<protein>
    <recommendedName>
        <fullName evidence="1">Enolase-phosphatase E1</fullName>
        <ecNumber evidence="1">3.1.3.77</ecNumber>
    </recommendedName>
    <alternativeName>
        <fullName evidence="1">2,3-diketo-5-methylthio-1-phosphopentane phosphatase</fullName>
    </alternativeName>
</protein>
<proteinExistence type="inferred from homology"/>